<dbReference type="EMBL" id="M27738">
    <property type="protein sequence ID" value="AAA32563.1"/>
    <property type="molecule type" value="mRNA"/>
</dbReference>
<dbReference type="SMR" id="P69626"/>
<dbReference type="GO" id="GO:0003723">
    <property type="term" value="F:RNA binding"/>
    <property type="evidence" value="ECO:0007669"/>
    <property type="project" value="UniProtKB-KW"/>
</dbReference>
<dbReference type="GO" id="GO:0006417">
    <property type="term" value="P:regulation of translation"/>
    <property type="evidence" value="ECO:0007669"/>
    <property type="project" value="UniProtKB-KW"/>
</dbReference>
<dbReference type="Gene3D" id="3.30.70.650">
    <property type="entry name" value="Translation repressor RegA"/>
    <property type="match status" value="1"/>
</dbReference>
<dbReference type="InterPro" id="IPR002702">
    <property type="entry name" value="Transl_repress_RegA"/>
</dbReference>
<dbReference type="InterPro" id="IPR036516">
    <property type="entry name" value="Transl_repress_RegA_sf"/>
</dbReference>
<dbReference type="Pfam" id="PF01818">
    <property type="entry name" value="Translat_reg"/>
    <property type="match status" value="1"/>
</dbReference>
<dbReference type="SUPFAM" id="SSF55064">
    <property type="entry name" value="Translational regulator protein regA"/>
    <property type="match status" value="1"/>
</dbReference>
<reference key="1">
    <citation type="journal article" date="1990" name="J. Bacteriol.">
        <title>Sequence analysis of conserved regA and variable orf43.1 genes in T4-like bacteriophages.</title>
        <authorList>
            <person name="Miller E.S."/>
            <person name="Jozwik C.E."/>
        </authorList>
    </citation>
    <scope>NUCLEOTIDE SEQUENCE [MRNA]</scope>
</reference>
<evidence type="ECO:0000250" key="1"/>
<evidence type="ECO:0000255" key="2"/>
<feature type="chain" id="PRO_0000164969" description="Translation repressor protein">
    <location>
        <begin position="1"/>
        <end position="122"/>
    </location>
</feature>
<feature type="DNA-binding region" description="H-T-H motif" evidence="2">
    <location>
        <begin position="15"/>
        <end position="37"/>
    </location>
</feature>
<name>REGA_BPT6</name>
<comment type="function">
    <text evidence="1">Controls the translation of a number of proteins (such as regA itself, rIIB and at least 35 others) by binding to their mRNA.</text>
</comment>
<sequence length="122" mass="14619">MIEITLKKPEDFLKVKETLTRMGIANNKDKVLYQSCHILQKKGLYYIVHFKEMLRMDGRQVEMTEEDEVRRDSIAWLLEDWGLIEIVPGQRTFMKDLTNNFRVISFKQKHEWKLVPKYTIGN</sequence>
<organismHost>
    <name type="scientific">Escherichia coli</name>
    <dbReference type="NCBI Taxonomy" id="562"/>
</organismHost>
<accession>P69626</accession>
<accession>P04528</accession>
<gene>
    <name type="primary">regA</name>
</gene>
<keyword id="KW-0678">Repressor</keyword>
<keyword id="KW-0694">RNA-binding</keyword>
<keyword id="KW-0810">Translation regulation</keyword>
<protein>
    <recommendedName>
        <fullName>Translation repressor protein</fullName>
    </recommendedName>
</protein>
<organism>
    <name type="scientific">Enterobacteria phage T6</name>
    <name type="common">Bacteriophage T6</name>
    <dbReference type="NCBI Taxonomy" id="10666"/>
    <lineage>
        <taxon>Viruses</taxon>
        <taxon>Duplodnaviria</taxon>
        <taxon>Heunggongvirae</taxon>
        <taxon>Uroviricota</taxon>
        <taxon>Caudoviricetes</taxon>
        <taxon>Straboviridae</taxon>
        <taxon>Tevenvirinae</taxon>
        <taxon>Tequatrovirus</taxon>
        <taxon>Tequatrovirus T6</taxon>
    </lineage>
</organism>
<proteinExistence type="evidence at transcript level"/>